<feature type="chain" id="PRO_0000414582" description="Multidrug resistance protein MdtG">
    <location>
        <begin position="1"/>
        <end position="412"/>
    </location>
</feature>
<feature type="transmembrane region" description="Helical" evidence="1">
    <location>
        <begin position="20"/>
        <end position="40"/>
    </location>
</feature>
<feature type="transmembrane region" description="Helical" evidence="1">
    <location>
        <begin position="62"/>
        <end position="82"/>
    </location>
</feature>
<feature type="transmembrane region" description="Helical" evidence="1">
    <location>
        <begin position="96"/>
        <end position="116"/>
    </location>
</feature>
<feature type="transmembrane region" description="Helical" evidence="1">
    <location>
        <begin position="119"/>
        <end position="139"/>
    </location>
</feature>
<feature type="transmembrane region" description="Helical" evidence="1">
    <location>
        <begin position="150"/>
        <end position="170"/>
    </location>
</feature>
<feature type="transmembrane region" description="Helical" evidence="1">
    <location>
        <begin position="177"/>
        <end position="197"/>
    </location>
</feature>
<feature type="transmembrane region" description="Helical" evidence="1">
    <location>
        <begin position="225"/>
        <end position="245"/>
    </location>
</feature>
<feature type="transmembrane region" description="Helical" evidence="1">
    <location>
        <begin position="260"/>
        <end position="280"/>
    </location>
</feature>
<feature type="transmembrane region" description="Helical" evidence="1">
    <location>
        <begin position="294"/>
        <end position="314"/>
    </location>
</feature>
<feature type="transmembrane region" description="Helical" evidence="1">
    <location>
        <begin position="382"/>
        <end position="402"/>
    </location>
</feature>
<proteinExistence type="inferred from homology"/>
<name>MDTG_RAHSY</name>
<accession>E8XY75</accession>
<dbReference type="EMBL" id="CP002505">
    <property type="protein sequence ID" value="ADW74575.1"/>
    <property type="molecule type" value="Genomic_DNA"/>
</dbReference>
<dbReference type="RefSeq" id="WP_013576271.1">
    <property type="nucleotide sequence ID" value="NZ_JBHUCJ010000028.1"/>
</dbReference>
<dbReference type="SMR" id="E8XY75"/>
<dbReference type="GeneID" id="95416446"/>
<dbReference type="KEGG" id="rah:Rahaq_2981"/>
<dbReference type="eggNOG" id="COG2814">
    <property type="taxonomic scope" value="Bacteria"/>
</dbReference>
<dbReference type="HOGENOM" id="CLU_001265_57_3_6"/>
<dbReference type="OrthoDB" id="65739at2"/>
<dbReference type="Proteomes" id="UP000007257">
    <property type="component" value="Chromosome"/>
</dbReference>
<dbReference type="GO" id="GO:0005886">
    <property type="term" value="C:plasma membrane"/>
    <property type="evidence" value="ECO:0007669"/>
    <property type="project" value="UniProtKB-SubCell"/>
</dbReference>
<dbReference type="GO" id="GO:0022857">
    <property type="term" value="F:transmembrane transporter activity"/>
    <property type="evidence" value="ECO:0007669"/>
    <property type="project" value="UniProtKB-UniRule"/>
</dbReference>
<dbReference type="CDD" id="cd17391">
    <property type="entry name" value="MFS_MdtG_MDR_like"/>
    <property type="match status" value="1"/>
</dbReference>
<dbReference type="FunFam" id="1.20.1250.20:FF:000020">
    <property type="entry name" value="Multidrug resistance protein MdtG"/>
    <property type="match status" value="1"/>
</dbReference>
<dbReference type="FunFam" id="1.20.1250.20:FF:000022">
    <property type="entry name" value="Multidrug resistance protein MdtG"/>
    <property type="match status" value="1"/>
</dbReference>
<dbReference type="Gene3D" id="1.20.1250.20">
    <property type="entry name" value="MFS general substrate transporter like domains"/>
    <property type="match status" value="2"/>
</dbReference>
<dbReference type="HAMAP" id="MF_01528">
    <property type="entry name" value="MFS_MdtG"/>
    <property type="match status" value="1"/>
</dbReference>
<dbReference type="InterPro" id="IPR011701">
    <property type="entry name" value="MFS"/>
</dbReference>
<dbReference type="InterPro" id="IPR020846">
    <property type="entry name" value="MFS_dom"/>
</dbReference>
<dbReference type="InterPro" id="IPR050497">
    <property type="entry name" value="MFS_MdtG_subfamily"/>
</dbReference>
<dbReference type="InterPro" id="IPR036259">
    <property type="entry name" value="MFS_trans_sf"/>
</dbReference>
<dbReference type="InterPro" id="IPR023692">
    <property type="entry name" value="Mutidrug-R_MdtG"/>
</dbReference>
<dbReference type="InterPro" id="IPR001958">
    <property type="entry name" value="Tet-R_TetA/multi-R_MdtG-like"/>
</dbReference>
<dbReference type="NCBIfam" id="NF007372">
    <property type="entry name" value="PRK09874.1"/>
    <property type="match status" value="1"/>
</dbReference>
<dbReference type="PANTHER" id="PTHR43414">
    <property type="entry name" value="MULTIDRUG RESISTANCE PROTEIN MDTG"/>
    <property type="match status" value="1"/>
</dbReference>
<dbReference type="PANTHER" id="PTHR43414:SF6">
    <property type="entry name" value="MULTIDRUG RESISTANCE PROTEIN MDTG"/>
    <property type="match status" value="1"/>
</dbReference>
<dbReference type="Pfam" id="PF07690">
    <property type="entry name" value="MFS_1"/>
    <property type="match status" value="1"/>
</dbReference>
<dbReference type="PRINTS" id="PR01035">
    <property type="entry name" value="TCRTETA"/>
</dbReference>
<dbReference type="SUPFAM" id="SSF103473">
    <property type="entry name" value="MFS general substrate transporter"/>
    <property type="match status" value="1"/>
</dbReference>
<dbReference type="PROSITE" id="PS50850">
    <property type="entry name" value="MFS"/>
    <property type="match status" value="1"/>
</dbReference>
<sequence>MTSASEPEIAPDPINWKRNLFVAWIGCFLTGAAFSLIMPFLPLYVETLGVTGHESLNMWSGLVFSITFLFSAIASPFWGGLADRKGRKIMLLRSALGMSIVMVLMGFAQNIWQFLILRALLGLLGGFVPNANALIATQIPRNKSGWALGTLSTGGVSGALLGPLVGGLLADSYGLRPVFFITASVLFLCFIMTLYFIREQFVPVSKKDMLNRKQVFASLKNPKLVLCLFVTTMIIQVATGSIAPILTLYVRELAGNTQNLAFISGMIASVPGVAALMSAPRLGKLGDRIGPERILVAMMALSVLLLIPMALVQTPLQLGILRFLLGACDGALLPAVQTLLIYNCTNQVAGRVFSYNQSFRDVGNVTGPLLGAAVSASYGFRTVFFVTAMVVLFNAGYSYWCLQRRPHQAMID</sequence>
<comment type="subcellular location">
    <subcellularLocation>
        <location evidence="1">Cell inner membrane</location>
        <topology evidence="1">Multi-pass membrane protein</topology>
    </subcellularLocation>
</comment>
<comment type="similarity">
    <text evidence="1">Belongs to the major facilitator superfamily. DHA1 family. MdtG (TC 2.A.1.2.20) subfamily.</text>
</comment>
<gene>
    <name evidence="1" type="primary">mdtG</name>
    <name type="ordered locus">Rahaq_2981</name>
</gene>
<protein>
    <recommendedName>
        <fullName evidence="1">Multidrug resistance protein MdtG</fullName>
    </recommendedName>
</protein>
<evidence type="ECO:0000255" key="1">
    <source>
        <dbReference type="HAMAP-Rule" id="MF_01528"/>
    </source>
</evidence>
<keyword id="KW-0997">Cell inner membrane</keyword>
<keyword id="KW-1003">Cell membrane</keyword>
<keyword id="KW-0472">Membrane</keyword>
<keyword id="KW-0812">Transmembrane</keyword>
<keyword id="KW-1133">Transmembrane helix</keyword>
<keyword id="KW-0813">Transport</keyword>
<reference key="1">
    <citation type="submission" date="2011-01" db="EMBL/GenBank/DDBJ databases">
        <title>Complete sequence of chromosome of Rahnella sp. Y9602.</title>
        <authorList>
            <consortium name="US DOE Joint Genome Institute"/>
            <person name="Lucas S."/>
            <person name="Copeland A."/>
            <person name="Lapidus A."/>
            <person name="Cheng J.-F."/>
            <person name="Goodwin L."/>
            <person name="Pitluck S."/>
            <person name="Lu M."/>
            <person name="Detter J.C."/>
            <person name="Han C."/>
            <person name="Tapia R."/>
            <person name="Land M."/>
            <person name="Hauser L."/>
            <person name="Kyrpides N."/>
            <person name="Ivanova N."/>
            <person name="Ovchinnikova G."/>
            <person name="Pagani I."/>
            <person name="Sobecky P.A."/>
            <person name="Martinez R.J."/>
            <person name="Woyke T."/>
        </authorList>
    </citation>
    <scope>NUCLEOTIDE SEQUENCE [LARGE SCALE GENOMIC DNA]</scope>
    <source>
        <strain>Y9602</strain>
    </source>
</reference>
<organism>
    <name type="scientific">Rahnella sp. (strain Y9602)</name>
    <dbReference type="NCBI Taxonomy" id="2703885"/>
    <lineage>
        <taxon>Bacteria</taxon>
        <taxon>Pseudomonadati</taxon>
        <taxon>Pseudomonadota</taxon>
        <taxon>Gammaproteobacteria</taxon>
        <taxon>Enterobacterales</taxon>
        <taxon>Yersiniaceae</taxon>
        <taxon>Rahnella</taxon>
    </lineage>
</organism>